<gene>
    <name evidence="1" type="primary">ccsA</name>
</gene>
<comment type="function">
    <text evidence="1">Required during biogenesis of c-type cytochromes (cytochrome c6 and cytochrome f) at the step of heme attachment.</text>
</comment>
<comment type="subunit">
    <text evidence="1">May interact with Ccs1.</text>
</comment>
<comment type="subcellular location">
    <subcellularLocation>
        <location evidence="1">Plastid</location>
        <location evidence="1">Chloroplast thylakoid membrane</location>
        <topology evidence="1">Multi-pass membrane protein</topology>
    </subcellularLocation>
</comment>
<comment type="RNA editing">
    <location>
        <position position="1" evidence="2"/>
    </location>
    <location>
        <position position="2" evidence="2"/>
    </location>
    <location>
        <position position="86" evidence="2"/>
    </location>
    <location>
        <position position="114" evidence="2"/>
    </location>
    <location>
        <position position="130" evidence="2"/>
    </location>
    <location>
        <position position="137" evidence="2"/>
    </location>
    <location>
        <position position="149" evidence="2"/>
    </location>
    <location>
        <position position="154" evidence="2"/>
    </location>
    <location>
        <position position="247" evidence="2"/>
    </location>
    <location>
        <position position="264" evidence="2"/>
    </location>
    <location>
        <position position="269" evidence="2"/>
    </location>
    <location>
        <position position="286" evidence="2"/>
    </location>
    <text>The initiator methionine is created by RNA editing.</text>
</comment>
<comment type="similarity">
    <text evidence="1">Belongs to the CcmF/CycK/Ccl1/NrfE/CcsA family.</text>
</comment>
<reference key="1">
    <citation type="journal article" date="2003" name="DNA Res.">
        <title>Complete nucleotide sequence of the chloroplast genome from a leptosporangiate fern, Adiantum capillus-veneris L.</title>
        <authorList>
            <person name="Wolf P.G."/>
            <person name="Rowe C.A."/>
            <person name="Sinclair R.B."/>
            <person name="Hasebe M."/>
        </authorList>
    </citation>
    <scope>NUCLEOTIDE SEQUENCE [LARGE SCALE GENOMIC DNA]</scope>
</reference>
<reference key="2">
    <citation type="journal article" date="2004" name="Gene">
        <title>High levels of RNA editing in a vascular plant chloroplast genome: analysis of transcripts from the fern Adiantum capillus-veneris.</title>
        <authorList>
            <person name="Wolf P.G."/>
            <person name="Rowe C.A."/>
            <person name="Hasebe M."/>
        </authorList>
    </citation>
    <scope>NUCLEOTIDE SEQUENCE [GENOMIC DNA]</scope>
    <scope>RNA EDITING</scope>
    <source>
        <tissue>Frond</tissue>
    </source>
</reference>
<geneLocation type="chloroplast"/>
<accession>Q85FH6</accession>
<sequence length="316" mass="36119">MIYTGIEYIFVNISFVMFFFVTLLNLINLFYKIDKIDHFSKNSMTIAFFCTTGFLITRYLQTRHLPLGNLYESLMFLSWGFSLLYLILEVRDQIGLSHAVLAPGAMLIHAFATLSLPQQMRSPTLLVPALQSQWLMMHVSAMLISYITLLCGSLLAITLLSLFYGKVGSVTLEHKFEKQSFFFLMNPRKNLWKQTGAENYSYFLISNSRKCQLINCLDKWACQTISLGFSLLTIGILSGAVWANEAWGSYWSWDPKETWALVTWLVYAIYLHTKVDKRKMGEGPAMTASMGFFLVWICFLGVNLLGVGLHNYGWLA</sequence>
<evidence type="ECO:0000255" key="1">
    <source>
        <dbReference type="HAMAP-Rule" id="MF_01391"/>
    </source>
</evidence>
<evidence type="ECO:0000269" key="2">
    <source>
    </source>
</evidence>
<keyword id="KW-0150">Chloroplast</keyword>
<keyword id="KW-0201">Cytochrome c-type biogenesis</keyword>
<keyword id="KW-0472">Membrane</keyword>
<keyword id="KW-0934">Plastid</keyword>
<keyword id="KW-0691">RNA editing</keyword>
<keyword id="KW-0793">Thylakoid</keyword>
<keyword id="KW-0812">Transmembrane</keyword>
<keyword id="KW-1133">Transmembrane helix</keyword>
<proteinExistence type="evidence at transcript level"/>
<organism>
    <name type="scientific">Adiantum capillus-veneris</name>
    <name type="common">Maidenhair fern</name>
    <dbReference type="NCBI Taxonomy" id="13818"/>
    <lineage>
        <taxon>Eukaryota</taxon>
        <taxon>Viridiplantae</taxon>
        <taxon>Streptophyta</taxon>
        <taxon>Embryophyta</taxon>
        <taxon>Tracheophyta</taxon>
        <taxon>Polypodiopsida</taxon>
        <taxon>Polypodiidae</taxon>
        <taxon>Polypodiales</taxon>
        <taxon>Pteridineae</taxon>
        <taxon>Pteridaceae</taxon>
        <taxon>Vittarioideae</taxon>
        <taxon>Adiantum</taxon>
    </lineage>
</organism>
<feature type="chain" id="PRO_0000201596" description="Cytochrome c biogenesis protein CcsA">
    <location>
        <begin position="1"/>
        <end position="316"/>
    </location>
</feature>
<feature type="transmembrane region" description="Helical" evidence="1">
    <location>
        <begin position="9"/>
        <end position="29"/>
    </location>
</feature>
<feature type="transmembrane region" description="Helical" evidence="1">
    <location>
        <begin position="39"/>
        <end position="61"/>
    </location>
</feature>
<feature type="transmembrane region" description="Helical" evidence="1">
    <location>
        <begin position="70"/>
        <end position="90"/>
    </location>
</feature>
<feature type="transmembrane region" description="Helical" evidence="1">
    <location>
        <begin position="94"/>
        <end position="114"/>
    </location>
</feature>
<feature type="transmembrane region" description="Helical" evidence="1">
    <location>
        <begin position="143"/>
        <end position="163"/>
    </location>
</feature>
<feature type="transmembrane region" description="Helical" evidence="1">
    <location>
        <begin position="224"/>
        <end position="244"/>
    </location>
</feature>
<feature type="transmembrane region" description="Helical" evidence="1">
    <location>
        <begin position="257"/>
        <end position="271"/>
    </location>
</feature>
<feature type="transmembrane region" description="Helical" evidence="1">
    <location>
        <begin position="289"/>
        <end position="309"/>
    </location>
</feature>
<dbReference type="EMBL" id="AY178864">
    <property type="protein sequence ID" value="AAP29440.2"/>
    <property type="molecule type" value="Genomic_DNA"/>
</dbReference>
<dbReference type="RefSeq" id="NP_848109.2">
    <property type="nucleotide sequence ID" value="NC_004766.1"/>
</dbReference>
<dbReference type="SMR" id="Q85FH6"/>
<dbReference type="GeneID" id="807443"/>
<dbReference type="GO" id="GO:0009535">
    <property type="term" value="C:chloroplast thylakoid membrane"/>
    <property type="evidence" value="ECO:0007669"/>
    <property type="project" value="UniProtKB-SubCell"/>
</dbReference>
<dbReference type="GO" id="GO:0005886">
    <property type="term" value="C:plasma membrane"/>
    <property type="evidence" value="ECO:0007669"/>
    <property type="project" value="TreeGrafter"/>
</dbReference>
<dbReference type="GO" id="GO:0020037">
    <property type="term" value="F:heme binding"/>
    <property type="evidence" value="ECO:0007669"/>
    <property type="project" value="InterPro"/>
</dbReference>
<dbReference type="GO" id="GO:0017004">
    <property type="term" value="P:cytochrome complex assembly"/>
    <property type="evidence" value="ECO:0007669"/>
    <property type="project" value="UniProtKB-UniRule"/>
</dbReference>
<dbReference type="HAMAP" id="MF_01391">
    <property type="entry name" value="CytC_CcsA"/>
    <property type="match status" value="1"/>
</dbReference>
<dbReference type="InterPro" id="IPR002541">
    <property type="entry name" value="Cyt_c_assembly"/>
</dbReference>
<dbReference type="InterPro" id="IPR017562">
    <property type="entry name" value="Cyt_c_biogenesis_CcsA"/>
</dbReference>
<dbReference type="InterPro" id="IPR045062">
    <property type="entry name" value="Cyt_c_biogenesis_CcsA/CcmC"/>
</dbReference>
<dbReference type="NCBIfam" id="TIGR03144">
    <property type="entry name" value="cytochr_II_ccsB"/>
    <property type="match status" value="1"/>
</dbReference>
<dbReference type="PANTHER" id="PTHR30071:SF1">
    <property type="entry name" value="CYTOCHROME B_B6 PROTEIN-RELATED"/>
    <property type="match status" value="1"/>
</dbReference>
<dbReference type="PANTHER" id="PTHR30071">
    <property type="entry name" value="HEME EXPORTER PROTEIN C"/>
    <property type="match status" value="1"/>
</dbReference>
<dbReference type="Pfam" id="PF01578">
    <property type="entry name" value="Cytochrom_C_asm"/>
    <property type="match status" value="1"/>
</dbReference>
<name>CCSA_ADICA</name>
<protein>
    <recommendedName>
        <fullName evidence="1">Cytochrome c biogenesis protein CcsA</fullName>
    </recommendedName>
</protein>